<comment type="function">
    <text evidence="1">Plays a role in the inhibition of the host toxin-antitoxin (TA) system. These modules made by the host and composed of a toxic gene and a neutralizing gene play role in stress response and programmed cell death. Gp4.5 interacts with the host protease lon to neutralize the degradation of the antitoxin that would result in the activation of the toxin and the destruction of the bacteria.</text>
</comment>
<comment type="subunit">
    <text evidence="1">Interacts with host lon protease; this interaction prevents the degradation of antitoxin by lon and thus the toxin activation.</text>
</comment>
<reference key="1">
    <citation type="journal article" date="1983" name="J. Mol. Biol.">
        <title>Complete nucleotide sequence of bacteriophage T7 DNA and the locations of T7 genetic elements.</title>
        <authorList>
            <person name="Dunn J.J."/>
            <person name="Studier F.W."/>
        </authorList>
    </citation>
    <scope>NUCLEOTIDE SEQUENCE [LARGE SCALE GENOMIC DNA]</scope>
</reference>
<reference key="2">
    <citation type="journal article" date="2013" name="Mol. Cell">
        <title>Discovery of functional toxin/antitoxin systems in bacteria by shotgun cloning.</title>
        <authorList>
            <person name="Sberro H."/>
            <person name="Leavitt A."/>
            <person name="Kiro R."/>
            <person name="Koh E."/>
            <person name="Peleg Y."/>
            <person name="Qimron U."/>
            <person name="Sorek R."/>
        </authorList>
    </citation>
    <scope>FUNCTION</scope>
    <scope>INTERACTION WITH HOST LON</scope>
</reference>
<name>ITAS_BPT7</name>
<sequence>MSNVAETIRLSDTADQWNRRVHINVRNGKATMVYRWKDSKSSKNHTQRMTLTDEQALRLVNALTKAAVTAIHEAGRVNEAMAILDKIDN</sequence>
<accession>P03785</accession>
<proteinExistence type="evidence at protein level"/>
<protein>
    <recommendedName>
        <fullName>Inhibitor of toxin/antitoxin system</fullName>
    </recommendedName>
    <alternativeName>
        <fullName>Gene product 4.5</fullName>
        <shortName>Gp4.5</shortName>
    </alternativeName>
</protein>
<organism>
    <name type="scientific">Escherichia phage T7</name>
    <name type="common">Bacteriophage T7</name>
    <dbReference type="NCBI Taxonomy" id="10760"/>
    <lineage>
        <taxon>Viruses</taxon>
        <taxon>Duplodnaviria</taxon>
        <taxon>Heunggongvirae</taxon>
        <taxon>Uroviricota</taxon>
        <taxon>Caudoviricetes</taxon>
        <taxon>Autographiviridae</taxon>
        <taxon>Studiervirinae</taxon>
        <taxon>Teseptimavirus</taxon>
        <taxon>Teseptimavirus T7</taxon>
    </lineage>
</organism>
<feature type="chain" id="PRO_0000106495" description="Inhibitor of toxin/antitoxin system">
    <location>
        <begin position="1"/>
        <end position="89"/>
    </location>
</feature>
<evidence type="ECO:0000269" key="1">
    <source>
    </source>
</evidence>
<organismHost>
    <name type="scientific">Escherichia coli</name>
    <dbReference type="NCBI Taxonomy" id="562"/>
</organismHost>
<gene>
    <name type="ordered locus">4.5</name>
</gene>
<keyword id="KW-0945">Host-virus interaction</keyword>
<keyword id="KW-1185">Reference proteome</keyword>
<keyword id="KW-1277">Toxin-antitoxin system</keyword>
<dbReference type="EMBL" id="V01146">
    <property type="protein sequence ID" value="CAA24410.1"/>
    <property type="molecule type" value="Genomic_DNA"/>
</dbReference>
<dbReference type="PIR" id="A04410">
    <property type="entry name" value="W4BP57"/>
</dbReference>
<dbReference type="RefSeq" id="NP_041980.1">
    <property type="nucleotide sequence ID" value="NC_001604.1"/>
</dbReference>
<dbReference type="SMR" id="P03785"/>
<dbReference type="IntAct" id="P03785">
    <property type="interactions" value="2"/>
</dbReference>
<dbReference type="MINT" id="P03785"/>
<dbReference type="KEGG" id="vg:1261059"/>
<dbReference type="OrthoDB" id="19180at10239"/>
<dbReference type="Proteomes" id="UP000000840">
    <property type="component" value="Genome"/>
</dbReference>
<dbReference type="InterPro" id="IPR035151">
    <property type="entry name" value="TA_inhibitor"/>
</dbReference>
<dbReference type="Pfam" id="PF17574">
    <property type="entry name" value="TA_inhibitor"/>
    <property type="match status" value="1"/>
</dbReference>